<keyword id="KW-0963">Cytoplasm</keyword>
<keyword id="KW-0489">Methyltransferase</keyword>
<keyword id="KW-0698">rRNA processing</keyword>
<keyword id="KW-0949">S-adenosyl-L-methionine</keyword>
<keyword id="KW-0808">Transferase</keyword>
<organism>
    <name type="scientific">Alteromonas mediterranea (strain DSM 17117 / CIP 110805 / LMG 28347 / Deep ecotype)</name>
    <dbReference type="NCBI Taxonomy" id="1774373"/>
    <lineage>
        <taxon>Bacteria</taxon>
        <taxon>Pseudomonadati</taxon>
        <taxon>Pseudomonadota</taxon>
        <taxon>Gammaproteobacteria</taxon>
        <taxon>Alteromonadales</taxon>
        <taxon>Alteromonadaceae</taxon>
        <taxon>Alteromonas/Salinimonas group</taxon>
        <taxon>Alteromonas</taxon>
    </lineage>
</organism>
<sequence length="211" mass="23920">MTIQQELHTILVQGLDALSLELSERQQQQLVDYVLLMDKWNKAYNLTSVRDPKQMMVKHILDSLAIVPHLEGDNIIDVGTGPGLPGMPLAIAFPEKRFTLLDSLGKRVRFMTQSVHTLGLKNVTPVQSRVEAHNGEVPYDIVLSRAFASLKDMLHWCQHLVDSEGQFLALKGQFPQDEIEEVSDHFHVSKTENLTVPNLVGERHLVWLKKK</sequence>
<protein>
    <recommendedName>
        <fullName evidence="1">Ribosomal RNA small subunit methyltransferase G</fullName>
        <ecNumber evidence="1">2.1.1.170</ecNumber>
    </recommendedName>
    <alternativeName>
        <fullName evidence="1">16S rRNA 7-methylguanosine methyltransferase</fullName>
        <shortName evidence="1">16S rRNA m7G methyltransferase</shortName>
    </alternativeName>
</protein>
<accession>B4RS91</accession>
<accession>F2GD46</accession>
<feature type="chain" id="PRO_1000118169" description="Ribosomal RNA small subunit methyltransferase G">
    <location>
        <begin position="1"/>
        <end position="211"/>
    </location>
</feature>
<feature type="binding site" evidence="1">
    <location>
        <position position="79"/>
    </location>
    <ligand>
        <name>S-adenosyl-L-methionine</name>
        <dbReference type="ChEBI" id="CHEBI:59789"/>
    </ligand>
</feature>
<feature type="binding site" evidence="1">
    <location>
        <position position="84"/>
    </location>
    <ligand>
        <name>S-adenosyl-L-methionine</name>
        <dbReference type="ChEBI" id="CHEBI:59789"/>
    </ligand>
</feature>
<feature type="binding site" evidence="1">
    <location>
        <begin position="130"/>
        <end position="131"/>
    </location>
    <ligand>
        <name>S-adenosyl-L-methionine</name>
        <dbReference type="ChEBI" id="CHEBI:59789"/>
    </ligand>
</feature>
<feature type="binding site" evidence="1">
    <location>
        <position position="145"/>
    </location>
    <ligand>
        <name>S-adenosyl-L-methionine</name>
        <dbReference type="ChEBI" id="CHEBI:59789"/>
    </ligand>
</feature>
<evidence type="ECO:0000255" key="1">
    <source>
        <dbReference type="HAMAP-Rule" id="MF_00074"/>
    </source>
</evidence>
<dbReference type="EC" id="2.1.1.170" evidence="1"/>
<dbReference type="EMBL" id="CP001103">
    <property type="protein sequence ID" value="AEB00224.1"/>
    <property type="molecule type" value="Genomic_DNA"/>
</dbReference>
<dbReference type="RefSeq" id="WP_012520227.1">
    <property type="nucleotide sequence ID" value="NC_011138.3"/>
</dbReference>
<dbReference type="SMR" id="B4RS91"/>
<dbReference type="GeneID" id="56344296"/>
<dbReference type="KEGG" id="amc:MADE_1020505"/>
<dbReference type="HOGENOM" id="CLU_065341_2_0_6"/>
<dbReference type="Proteomes" id="UP000001870">
    <property type="component" value="Chromosome"/>
</dbReference>
<dbReference type="GO" id="GO:0005829">
    <property type="term" value="C:cytosol"/>
    <property type="evidence" value="ECO:0007669"/>
    <property type="project" value="TreeGrafter"/>
</dbReference>
<dbReference type="GO" id="GO:0070043">
    <property type="term" value="F:rRNA (guanine-N7-)-methyltransferase activity"/>
    <property type="evidence" value="ECO:0007669"/>
    <property type="project" value="UniProtKB-UniRule"/>
</dbReference>
<dbReference type="CDD" id="cd02440">
    <property type="entry name" value="AdoMet_MTases"/>
    <property type="match status" value="1"/>
</dbReference>
<dbReference type="Gene3D" id="3.40.50.150">
    <property type="entry name" value="Vaccinia Virus protein VP39"/>
    <property type="match status" value="1"/>
</dbReference>
<dbReference type="HAMAP" id="MF_00074">
    <property type="entry name" value="16SrRNA_methyltr_G"/>
    <property type="match status" value="1"/>
</dbReference>
<dbReference type="InterPro" id="IPR003682">
    <property type="entry name" value="rRNA_ssu_MeTfrase_G"/>
</dbReference>
<dbReference type="InterPro" id="IPR029063">
    <property type="entry name" value="SAM-dependent_MTases_sf"/>
</dbReference>
<dbReference type="NCBIfam" id="TIGR00138">
    <property type="entry name" value="rsmG_gidB"/>
    <property type="match status" value="1"/>
</dbReference>
<dbReference type="PANTHER" id="PTHR31760">
    <property type="entry name" value="S-ADENOSYL-L-METHIONINE-DEPENDENT METHYLTRANSFERASES SUPERFAMILY PROTEIN"/>
    <property type="match status" value="1"/>
</dbReference>
<dbReference type="PANTHER" id="PTHR31760:SF0">
    <property type="entry name" value="S-ADENOSYL-L-METHIONINE-DEPENDENT METHYLTRANSFERASES SUPERFAMILY PROTEIN"/>
    <property type="match status" value="1"/>
</dbReference>
<dbReference type="Pfam" id="PF02527">
    <property type="entry name" value="GidB"/>
    <property type="match status" value="1"/>
</dbReference>
<dbReference type="PIRSF" id="PIRSF003078">
    <property type="entry name" value="GidB"/>
    <property type="match status" value="1"/>
</dbReference>
<dbReference type="SUPFAM" id="SSF53335">
    <property type="entry name" value="S-adenosyl-L-methionine-dependent methyltransferases"/>
    <property type="match status" value="1"/>
</dbReference>
<proteinExistence type="inferred from homology"/>
<reference key="1">
    <citation type="journal article" date="2008" name="ISME J.">
        <title>Comparative genomics of two ecotypes of the marine planktonic copiotroph Alteromonas macleodii suggests alternative lifestyles associated with different kinds of particulate organic matter.</title>
        <authorList>
            <person name="Ivars-Martinez E."/>
            <person name="Martin-Cuadrado A.-B."/>
            <person name="D'Auria G."/>
            <person name="Mira A."/>
            <person name="Ferriera S."/>
            <person name="Johnson J."/>
            <person name="Friedman R."/>
            <person name="Rodriguez-Valera F."/>
        </authorList>
    </citation>
    <scope>NUCLEOTIDE SEQUENCE [LARGE SCALE GENOMIC DNA]</scope>
    <source>
        <strain>DSM 17117 / CIP 110805 / LMG 28347 / Deep ecotype</strain>
    </source>
</reference>
<name>RSMG_ALTMD</name>
<gene>
    <name evidence="1" type="primary">rsmG</name>
    <name type="ordered locus">MADE_1020505</name>
</gene>
<comment type="function">
    <text evidence="1">Specifically methylates the N7 position of guanine in position 527 of 16S rRNA.</text>
</comment>
<comment type="catalytic activity">
    <reaction evidence="1">
        <text>guanosine(527) in 16S rRNA + S-adenosyl-L-methionine = N(7)-methylguanosine(527) in 16S rRNA + S-adenosyl-L-homocysteine</text>
        <dbReference type="Rhea" id="RHEA:42732"/>
        <dbReference type="Rhea" id="RHEA-COMP:10209"/>
        <dbReference type="Rhea" id="RHEA-COMP:10210"/>
        <dbReference type="ChEBI" id="CHEBI:57856"/>
        <dbReference type="ChEBI" id="CHEBI:59789"/>
        <dbReference type="ChEBI" id="CHEBI:74269"/>
        <dbReference type="ChEBI" id="CHEBI:74480"/>
        <dbReference type="EC" id="2.1.1.170"/>
    </reaction>
</comment>
<comment type="subcellular location">
    <subcellularLocation>
        <location evidence="1">Cytoplasm</location>
    </subcellularLocation>
</comment>
<comment type="similarity">
    <text evidence="1">Belongs to the methyltransferase superfamily. RNA methyltransferase RsmG family.</text>
</comment>